<organism>
    <name type="scientific">Geobacter metallireducens (strain ATCC 53774 / DSM 7210 / GS-15)</name>
    <dbReference type="NCBI Taxonomy" id="269799"/>
    <lineage>
        <taxon>Bacteria</taxon>
        <taxon>Pseudomonadati</taxon>
        <taxon>Thermodesulfobacteriota</taxon>
        <taxon>Desulfuromonadia</taxon>
        <taxon>Geobacterales</taxon>
        <taxon>Geobacteraceae</taxon>
        <taxon>Geobacter</taxon>
    </lineage>
</organism>
<dbReference type="EC" id="3.5.4.19" evidence="1"/>
<dbReference type="EMBL" id="CP000148">
    <property type="protein sequence ID" value="ABB32126.1"/>
    <property type="molecule type" value="Genomic_DNA"/>
</dbReference>
<dbReference type="RefSeq" id="WP_004511947.1">
    <property type="nucleotide sequence ID" value="NC_007517.1"/>
</dbReference>
<dbReference type="SMR" id="Q39UE8"/>
<dbReference type="STRING" id="269799.Gmet_1897"/>
<dbReference type="KEGG" id="gme:Gmet_1897"/>
<dbReference type="eggNOG" id="COG0139">
    <property type="taxonomic scope" value="Bacteria"/>
</dbReference>
<dbReference type="HOGENOM" id="CLU_048577_5_0_7"/>
<dbReference type="UniPathway" id="UPA00031">
    <property type="reaction ID" value="UER00008"/>
</dbReference>
<dbReference type="Proteomes" id="UP000007073">
    <property type="component" value="Chromosome"/>
</dbReference>
<dbReference type="GO" id="GO:0005737">
    <property type="term" value="C:cytoplasm"/>
    <property type="evidence" value="ECO:0007669"/>
    <property type="project" value="UniProtKB-SubCell"/>
</dbReference>
<dbReference type="GO" id="GO:0000287">
    <property type="term" value="F:magnesium ion binding"/>
    <property type="evidence" value="ECO:0007669"/>
    <property type="project" value="UniProtKB-UniRule"/>
</dbReference>
<dbReference type="GO" id="GO:0004635">
    <property type="term" value="F:phosphoribosyl-AMP cyclohydrolase activity"/>
    <property type="evidence" value="ECO:0007669"/>
    <property type="project" value="UniProtKB-UniRule"/>
</dbReference>
<dbReference type="GO" id="GO:0008270">
    <property type="term" value="F:zinc ion binding"/>
    <property type="evidence" value="ECO:0007669"/>
    <property type="project" value="UniProtKB-UniRule"/>
</dbReference>
<dbReference type="GO" id="GO:0000105">
    <property type="term" value="P:L-histidine biosynthetic process"/>
    <property type="evidence" value="ECO:0007669"/>
    <property type="project" value="UniProtKB-UniRule"/>
</dbReference>
<dbReference type="FunFam" id="3.10.20.810:FF:000001">
    <property type="entry name" value="Histidine biosynthesis bifunctional protein HisIE"/>
    <property type="match status" value="1"/>
</dbReference>
<dbReference type="Gene3D" id="3.10.20.810">
    <property type="entry name" value="Phosphoribosyl-AMP cyclohydrolase"/>
    <property type="match status" value="1"/>
</dbReference>
<dbReference type="HAMAP" id="MF_01021">
    <property type="entry name" value="HisI"/>
    <property type="match status" value="1"/>
</dbReference>
<dbReference type="InterPro" id="IPR026660">
    <property type="entry name" value="PRA-CH"/>
</dbReference>
<dbReference type="InterPro" id="IPR002496">
    <property type="entry name" value="PRib_AMP_CycHydrolase_dom"/>
</dbReference>
<dbReference type="InterPro" id="IPR038019">
    <property type="entry name" value="PRib_AMP_CycHydrolase_sf"/>
</dbReference>
<dbReference type="NCBIfam" id="NF000768">
    <property type="entry name" value="PRK00051.1"/>
    <property type="match status" value="1"/>
</dbReference>
<dbReference type="PANTHER" id="PTHR42945">
    <property type="entry name" value="HISTIDINE BIOSYNTHESIS BIFUNCTIONAL PROTEIN"/>
    <property type="match status" value="1"/>
</dbReference>
<dbReference type="PANTHER" id="PTHR42945:SF1">
    <property type="entry name" value="HISTIDINE BIOSYNTHESIS BIFUNCTIONAL PROTEIN HIS7"/>
    <property type="match status" value="1"/>
</dbReference>
<dbReference type="Pfam" id="PF01502">
    <property type="entry name" value="PRA-CH"/>
    <property type="match status" value="1"/>
</dbReference>
<dbReference type="SUPFAM" id="SSF141734">
    <property type="entry name" value="HisI-like"/>
    <property type="match status" value="1"/>
</dbReference>
<protein>
    <recommendedName>
        <fullName evidence="1">Phosphoribosyl-AMP cyclohydrolase</fullName>
        <shortName evidence="1">PRA-CH</shortName>
        <ecNumber evidence="1">3.5.4.19</ecNumber>
    </recommendedName>
</protein>
<sequence length="125" mass="14305">MIQIDFQKMGGLIPAIIQDHESGEVLMVAFMDEKTLNLTLESGKTWFFSRTRNKYWMKGEESGNTQEVIEVLTDCDADSVVIKVKQNGPAACHTGNRSCFYVRWEGGQWVEHSNPLFDPKEVYKK</sequence>
<gene>
    <name evidence="1" type="primary">hisI</name>
    <name type="ordered locus">Gmet_1897</name>
</gene>
<comment type="function">
    <text evidence="1">Catalyzes the hydrolysis of the adenine ring of phosphoribosyl-AMP.</text>
</comment>
<comment type="catalytic activity">
    <reaction evidence="1">
        <text>1-(5-phospho-beta-D-ribosyl)-5'-AMP + H2O = 1-(5-phospho-beta-D-ribosyl)-5-[(5-phospho-beta-D-ribosylamino)methylideneamino]imidazole-4-carboxamide</text>
        <dbReference type="Rhea" id="RHEA:20049"/>
        <dbReference type="ChEBI" id="CHEBI:15377"/>
        <dbReference type="ChEBI" id="CHEBI:58435"/>
        <dbReference type="ChEBI" id="CHEBI:59457"/>
        <dbReference type="EC" id="3.5.4.19"/>
    </reaction>
</comment>
<comment type="cofactor">
    <cofactor evidence="1">
        <name>Mg(2+)</name>
        <dbReference type="ChEBI" id="CHEBI:18420"/>
    </cofactor>
    <text evidence="1">Binds 1 Mg(2+) ion per subunit.</text>
</comment>
<comment type="cofactor">
    <cofactor evidence="1">
        <name>Zn(2+)</name>
        <dbReference type="ChEBI" id="CHEBI:29105"/>
    </cofactor>
    <text evidence="1">Binds 1 zinc ion per subunit.</text>
</comment>
<comment type="pathway">
    <text evidence="1">Amino-acid biosynthesis; L-histidine biosynthesis; L-histidine from 5-phospho-alpha-D-ribose 1-diphosphate: step 3/9.</text>
</comment>
<comment type="subunit">
    <text evidence="1">Homodimer.</text>
</comment>
<comment type="subcellular location">
    <subcellularLocation>
        <location evidence="1">Cytoplasm</location>
    </subcellularLocation>
</comment>
<comment type="similarity">
    <text evidence="1">Belongs to the PRA-CH family.</text>
</comment>
<accession>Q39UE8</accession>
<reference key="1">
    <citation type="journal article" date="2009" name="BMC Microbiol.">
        <title>The genome sequence of Geobacter metallireducens: features of metabolism, physiology and regulation common and dissimilar to Geobacter sulfurreducens.</title>
        <authorList>
            <person name="Aklujkar M."/>
            <person name="Krushkal J."/>
            <person name="DiBartolo G."/>
            <person name="Lapidus A."/>
            <person name="Land M.L."/>
            <person name="Lovley D.R."/>
        </authorList>
    </citation>
    <scope>NUCLEOTIDE SEQUENCE [LARGE SCALE GENOMIC DNA]</scope>
    <source>
        <strain>ATCC 53774 / DSM 7210 / GS-15</strain>
    </source>
</reference>
<keyword id="KW-0028">Amino-acid biosynthesis</keyword>
<keyword id="KW-0963">Cytoplasm</keyword>
<keyword id="KW-0368">Histidine biosynthesis</keyword>
<keyword id="KW-0378">Hydrolase</keyword>
<keyword id="KW-0460">Magnesium</keyword>
<keyword id="KW-0479">Metal-binding</keyword>
<keyword id="KW-1185">Reference proteome</keyword>
<keyword id="KW-0862">Zinc</keyword>
<evidence type="ECO:0000255" key="1">
    <source>
        <dbReference type="HAMAP-Rule" id="MF_01021"/>
    </source>
</evidence>
<feature type="chain" id="PRO_0000229822" description="Phosphoribosyl-AMP cyclohydrolase">
    <location>
        <begin position="1"/>
        <end position="125"/>
    </location>
</feature>
<feature type="binding site" evidence="1">
    <location>
        <position position="74"/>
    </location>
    <ligand>
        <name>Mg(2+)</name>
        <dbReference type="ChEBI" id="CHEBI:18420"/>
    </ligand>
</feature>
<feature type="binding site" evidence="1">
    <location>
        <position position="75"/>
    </location>
    <ligand>
        <name>Zn(2+)</name>
        <dbReference type="ChEBI" id="CHEBI:29105"/>
        <note>ligand shared between dimeric partners</note>
    </ligand>
</feature>
<feature type="binding site" evidence="1">
    <location>
        <position position="76"/>
    </location>
    <ligand>
        <name>Mg(2+)</name>
        <dbReference type="ChEBI" id="CHEBI:18420"/>
    </ligand>
</feature>
<feature type="binding site" evidence="1">
    <location>
        <position position="78"/>
    </location>
    <ligand>
        <name>Mg(2+)</name>
        <dbReference type="ChEBI" id="CHEBI:18420"/>
    </ligand>
</feature>
<feature type="binding site" evidence="1">
    <location>
        <position position="92"/>
    </location>
    <ligand>
        <name>Zn(2+)</name>
        <dbReference type="ChEBI" id="CHEBI:29105"/>
        <note>ligand shared between dimeric partners</note>
    </ligand>
</feature>
<feature type="binding site" evidence="1">
    <location>
        <position position="99"/>
    </location>
    <ligand>
        <name>Zn(2+)</name>
        <dbReference type="ChEBI" id="CHEBI:29105"/>
        <note>ligand shared between dimeric partners</note>
    </ligand>
</feature>
<name>HIS3_GEOMG</name>
<proteinExistence type="inferred from homology"/>